<evidence type="ECO:0000255" key="1">
    <source>
        <dbReference type="HAMAP-Rule" id="MF_00394"/>
    </source>
</evidence>
<gene>
    <name evidence="1" type="primary">gpsA</name>
    <name type="ordered locus">CbuG_0491</name>
</gene>
<keyword id="KW-0963">Cytoplasm</keyword>
<keyword id="KW-0444">Lipid biosynthesis</keyword>
<keyword id="KW-0443">Lipid metabolism</keyword>
<keyword id="KW-0520">NAD</keyword>
<keyword id="KW-0521">NADP</keyword>
<keyword id="KW-0547">Nucleotide-binding</keyword>
<keyword id="KW-0560">Oxidoreductase</keyword>
<keyword id="KW-0594">Phospholipid biosynthesis</keyword>
<keyword id="KW-1208">Phospholipid metabolism</keyword>
<dbReference type="EC" id="1.1.1.94" evidence="1"/>
<dbReference type="EMBL" id="CP001019">
    <property type="protein sequence ID" value="ACJ17913.1"/>
    <property type="molecule type" value="Genomic_DNA"/>
</dbReference>
<dbReference type="RefSeq" id="WP_010958277.1">
    <property type="nucleotide sequence ID" value="NC_011527.1"/>
</dbReference>
<dbReference type="SMR" id="B6IYY5"/>
<dbReference type="KEGG" id="cbg:CbuG_0491"/>
<dbReference type="HOGENOM" id="CLU_033449_0_2_6"/>
<dbReference type="UniPathway" id="UPA00940"/>
<dbReference type="GO" id="GO:0005829">
    <property type="term" value="C:cytosol"/>
    <property type="evidence" value="ECO:0007669"/>
    <property type="project" value="TreeGrafter"/>
</dbReference>
<dbReference type="GO" id="GO:0047952">
    <property type="term" value="F:glycerol-3-phosphate dehydrogenase [NAD(P)+] activity"/>
    <property type="evidence" value="ECO:0007669"/>
    <property type="project" value="UniProtKB-UniRule"/>
</dbReference>
<dbReference type="GO" id="GO:0051287">
    <property type="term" value="F:NAD binding"/>
    <property type="evidence" value="ECO:0007669"/>
    <property type="project" value="InterPro"/>
</dbReference>
<dbReference type="GO" id="GO:0005975">
    <property type="term" value="P:carbohydrate metabolic process"/>
    <property type="evidence" value="ECO:0007669"/>
    <property type="project" value="InterPro"/>
</dbReference>
<dbReference type="GO" id="GO:0046167">
    <property type="term" value="P:glycerol-3-phosphate biosynthetic process"/>
    <property type="evidence" value="ECO:0007669"/>
    <property type="project" value="UniProtKB-UniRule"/>
</dbReference>
<dbReference type="GO" id="GO:0046168">
    <property type="term" value="P:glycerol-3-phosphate catabolic process"/>
    <property type="evidence" value="ECO:0007669"/>
    <property type="project" value="InterPro"/>
</dbReference>
<dbReference type="GO" id="GO:0046474">
    <property type="term" value="P:glycerophospholipid biosynthetic process"/>
    <property type="evidence" value="ECO:0007669"/>
    <property type="project" value="TreeGrafter"/>
</dbReference>
<dbReference type="FunFam" id="1.10.1040.10:FF:000001">
    <property type="entry name" value="Glycerol-3-phosphate dehydrogenase [NAD(P)+]"/>
    <property type="match status" value="1"/>
</dbReference>
<dbReference type="FunFam" id="3.40.50.720:FF:000019">
    <property type="entry name" value="Glycerol-3-phosphate dehydrogenase [NAD(P)+]"/>
    <property type="match status" value="1"/>
</dbReference>
<dbReference type="Gene3D" id="1.10.1040.10">
    <property type="entry name" value="N-(1-d-carboxylethyl)-l-norvaline Dehydrogenase, domain 2"/>
    <property type="match status" value="1"/>
</dbReference>
<dbReference type="Gene3D" id="3.40.50.720">
    <property type="entry name" value="NAD(P)-binding Rossmann-like Domain"/>
    <property type="match status" value="1"/>
</dbReference>
<dbReference type="HAMAP" id="MF_00394">
    <property type="entry name" value="NAD_Glyc3P_dehydrog"/>
    <property type="match status" value="1"/>
</dbReference>
<dbReference type="InterPro" id="IPR008927">
    <property type="entry name" value="6-PGluconate_DH-like_C_sf"/>
</dbReference>
<dbReference type="InterPro" id="IPR013328">
    <property type="entry name" value="6PGD_dom2"/>
</dbReference>
<dbReference type="InterPro" id="IPR006168">
    <property type="entry name" value="G3P_DH_NAD-dep"/>
</dbReference>
<dbReference type="InterPro" id="IPR006109">
    <property type="entry name" value="G3P_DH_NAD-dep_C"/>
</dbReference>
<dbReference type="InterPro" id="IPR011128">
    <property type="entry name" value="G3P_DH_NAD-dep_N"/>
</dbReference>
<dbReference type="InterPro" id="IPR036291">
    <property type="entry name" value="NAD(P)-bd_dom_sf"/>
</dbReference>
<dbReference type="NCBIfam" id="NF000940">
    <property type="entry name" value="PRK00094.1-2"/>
    <property type="match status" value="1"/>
</dbReference>
<dbReference type="NCBIfam" id="NF000942">
    <property type="entry name" value="PRK00094.1-4"/>
    <property type="match status" value="1"/>
</dbReference>
<dbReference type="PANTHER" id="PTHR11728">
    <property type="entry name" value="GLYCEROL-3-PHOSPHATE DEHYDROGENASE"/>
    <property type="match status" value="1"/>
</dbReference>
<dbReference type="PANTHER" id="PTHR11728:SF1">
    <property type="entry name" value="GLYCEROL-3-PHOSPHATE DEHYDROGENASE [NAD(+)] 2, CHLOROPLASTIC"/>
    <property type="match status" value="1"/>
</dbReference>
<dbReference type="Pfam" id="PF07479">
    <property type="entry name" value="NAD_Gly3P_dh_C"/>
    <property type="match status" value="1"/>
</dbReference>
<dbReference type="Pfam" id="PF01210">
    <property type="entry name" value="NAD_Gly3P_dh_N"/>
    <property type="match status" value="1"/>
</dbReference>
<dbReference type="PIRSF" id="PIRSF000114">
    <property type="entry name" value="Glycerol-3-P_dh"/>
    <property type="match status" value="1"/>
</dbReference>
<dbReference type="PRINTS" id="PR00077">
    <property type="entry name" value="GPDHDRGNASE"/>
</dbReference>
<dbReference type="SUPFAM" id="SSF48179">
    <property type="entry name" value="6-phosphogluconate dehydrogenase C-terminal domain-like"/>
    <property type="match status" value="1"/>
</dbReference>
<dbReference type="SUPFAM" id="SSF51735">
    <property type="entry name" value="NAD(P)-binding Rossmann-fold domains"/>
    <property type="match status" value="1"/>
</dbReference>
<dbReference type="PROSITE" id="PS00957">
    <property type="entry name" value="NAD_G3PDH"/>
    <property type="match status" value="1"/>
</dbReference>
<protein>
    <recommendedName>
        <fullName evidence="1">Glycerol-3-phosphate dehydrogenase [NAD(P)+]</fullName>
        <ecNumber evidence="1">1.1.1.94</ecNumber>
    </recommendedName>
    <alternativeName>
        <fullName evidence="1">NAD(P)(+)-dependent glycerol-3-phosphate dehydrogenase</fullName>
    </alternativeName>
    <alternativeName>
        <fullName evidence="1">NAD(P)H-dependent dihydroxyacetone-phosphate reductase</fullName>
    </alternativeName>
</protein>
<sequence>MEPFKHPIAILGAGSWGTALALVLARKGQKVRLWSYESDHVDEMQAEGVNNRYLPNYPFPETLKAYCDLKASLEGVTDILIVVPSFAFHEVITRMKPLIDAKTRIAWGTKGLAKGSRLLHEVVATELGQVPMAVISGPSLATEVAANLPTAVSLASNNSQFSKDLIERLHGQRFRVYKNDDMIGVELCGSVKNILAIATGISDGLKLGSNARAALITRGLTEMGRLVSVFGGKQETLTGLAGLGDLVLTCTDNQSRNRRFGLALGEGVDKKEAQQAIGQAIEGLYNTDQVHALAQKHAIEMPLTFQVHRILHEDLDPQQAVQELLERSPKAE</sequence>
<comment type="function">
    <text evidence="1">Catalyzes the reduction of the glycolytic intermediate dihydroxyacetone phosphate (DHAP) to sn-glycerol 3-phosphate (G3P), the key precursor for phospholipid synthesis.</text>
</comment>
<comment type="catalytic activity">
    <reaction evidence="1">
        <text>sn-glycerol 3-phosphate + NAD(+) = dihydroxyacetone phosphate + NADH + H(+)</text>
        <dbReference type="Rhea" id="RHEA:11092"/>
        <dbReference type="ChEBI" id="CHEBI:15378"/>
        <dbReference type="ChEBI" id="CHEBI:57540"/>
        <dbReference type="ChEBI" id="CHEBI:57597"/>
        <dbReference type="ChEBI" id="CHEBI:57642"/>
        <dbReference type="ChEBI" id="CHEBI:57945"/>
        <dbReference type="EC" id="1.1.1.94"/>
    </reaction>
    <physiologicalReaction direction="right-to-left" evidence="1">
        <dbReference type="Rhea" id="RHEA:11094"/>
    </physiologicalReaction>
</comment>
<comment type="catalytic activity">
    <reaction evidence="1">
        <text>sn-glycerol 3-phosphate + NADP(+) = dihydroxyacetone phosphate + NADPH + H(+)</text>
        <dbReference type="Rhea" id="RHEA:11096"/>
        <dbReference type="ChEBI" id="CHEBI:15378"/>
        <dbReference type="ChEBI" id="CHEBI:57597"/>
        <dbReference type="ChEBI" id="CHEBI:57642"/>
        <dbReference type="ChEBI" id="CHEBI:57783"/>
        <dbReference type="ChEBI" id="CHEBI:58349"/>
        <dbReference type="EC" id="1.1.1.94"/>
    </reaction>
    <physiologicalReaction direction="right-to-left" evidence="1">
        <dbReference type="Rhea" id="RHEA:11098"/>
    </physiologicalReaction>
</comment>
<comment type="pathway">
    <text evidence="1">Membrane lipid metabolism; glycerophospholipid metabolism.</text>
</comment>
<comment type="subcellular location">
    <subcellularLocation>
        <location evidence="1">Cytoplasm</location>
    </subcellularLocation>
</comment>
<comment type="similarity">
    <text evidence="1">Belongs to the NAD-dependent glycerol-3-phosphate dehydrogenase family.</text>
</comment>
<accession>B6IYY5</accession>
<proteinExistence type="inferred from homology"/>
<name>GPDA_COXB2</name>
<feature type="chain" id="PRO_1000190131" description="Glycerol-3-phosphate dehydrogenase [NAD(P)+]">
    <location>
        <begin position="1"/>
        <end position="332"/>
    </location>
</feature>
<feature type="active site" description="Proton acceptor" evidence="1">
    <location>
        <position position="192"/>
    </location>
</feature>
<feature type="binding site" evidence="1">
    <location>
        <position position="15"/>
    </location>
    <ligand>
        <name>NADPH</name>
        <dbReference type="ChEBI" id="CHEBI:57783"/>
    </ligand>
</feature>
<feature type="binding site" evidence="1">
    <location>
        <position position="16"/>
    </location>
    <ligand>
        <name>NADPH</name>
        <dbReference type="ChEBI" id="CHEBI:57783"/>
    </ligand>
</feature>
<feature type="binding site" evidence="1">
    <location>
        <position position="110"/>
    </location>
    <ligand>
        <name>NADPH</name>
        <dbReference type="ChEBI" id="CHEBI:57783"/>
    </ligand>
</feature>
<feature type="binding site" evidence="1">
    <location>
        <position position="110"/>
    </location>
    <ligand>
        <name>sn-glycerol 3-phosphate</name>
        <dbReference type="ChEBI" id="CHEBI:57597"/>
    </ligand>
</feature>
<feature type="binding site" evidence="1">
    <location>
        <position position="137"/>
    </location>
    <ligand>
        <name>sn-glycerol 3-phosphate</name>
        <dbReference type="ChEBI" id="CHEBI:57597"/>
    </ligand>
</feature>
<feature type="binding site" evidence="1">
    <location>
        <position position="139"/>
    </location>
    <ligand>
        <name>sn-glycerol 3-phosphate</name>
        <dbReference type="ChEBI" id="CHEBI:57597"/>
    </ligand>
</feature>
<feature type="binding site" evidence="1">
    <location>
        <position position="141"/>
    </location>
    <ligand>
        <name>NADPH</name>
        <dbReference type="ChEBI" id="CHEBI:57783"/>
    </ligand>
</feature>
<feature type="binding site" evidence="1">
    <location>
        <position position="192"/>
    </location>
    <ligand>
        <name>sn-glycerol 3-phosphate</name>
        <dbReference type="ChEBI" id="CHEBI:57597"/>
    </ligand>
</feature>
<feature type="binding site" evidence="1">
    <location>
        <position position="245"/>
    </location>
    <ligand>
        <name>sn-glycerol 3-phosphate</name>
        <dbReference type="ChEBI" id="CHEBI:57597"/>
    </ligand>
</feature>
<feature type="binding site" evidence="1">
    <location>
        <position position="255"/>
    </location>
    <ligand>
        <name>sn-glycerol 3-phosphate</name>
        <dbReference type="ChEBI" id="CHEBI:57597"/>
    </ligand>
</feature>
<feature type="binding site" evidence="1">
    <location>
        <position position="256"/>
    </location>
    <ligand>
        <name>NADPH</name>
        <dbReference type="ChEBI" id="CHEBI:57783"/>
    </ligand>
</feature>
<feature type="binding site" evidence="1">
    <location>
        <position position="256"/>
    </location>
    <ligand>
        <name>sn-glycerol 3-phosphate</name>
        <dbReference type="ChEBI" id="CHEBI:57597"/>
    </ligand>
</feature>
<feature type="binding site" evidence="1">
    <location>
        <position position="257"/>
    </location>
    <ligand>
        <name>sn-glycerol 3-phosphate</name>
        <dbReference type="ChEBI" id="CHEBI:57597"/>
    </ligand>
</feature>
<feature type="binding site" evidence="1">
    <location>
        <position position="282"/>
    </location>
    <ligand>
        <name>NADPH</name>
        <dbReference type="ChEBI" id="CHEBI:57783"/>
    </ligand>
</feature>
<organism>
    <name type="scientific">Coxiella burnetii (strain CbuG_Q212)</name>
    <name type="common">Coxiella burnetii (strain Q212)</name>
    <dbReference type="NCBI Taxonomy" id="434923"/>
    <lineage>
        <taxon>Bacteria</taxon>
        <taxon>Pseudomonadati</taxon>
        <taxon>Pseudomonadota</taxon>
        <taxon>Gammaproteobacteria</taxon>
        <taxon>Legionellales</taxon>
        <taxon>Coxiellaceae</taxon>
        <taxon>Coxiella</taxon>
    </lineage>
</organism>
<reference key="1">
    <citation type="journal article" date="2009" name="Infect. Immun.">
        <title>Comparative genomics reveal extensive transposon-mediated genomic plasticity and diversity among potential effector proteins within the genus Coxiella.</title>
        <authorList>
            <person name="Beare P.A."/>
            <person name="Unsworth N."/>
            <person name="Andoh M."/>
            <person name="Voth D.E."/>
            <person name="Omsland A."/>
            <person name="Gilk S.D."/>
            <person name="Williams K.P."/>
            <person name="Sobral B.W."/>
            <person name="Kupko J.J. III"/>
            <person name="Porcella S.F."/>
            <person name="Samuel J.E."/>
            <person name="Heinzen R.A."/>
        </authorList>
    </citation>
    <scope>NUCLEOTIDE SEQUENCE [LARGE SCALE GENOMIC DNA]</scope>
    <source>
        <strain>CbuG_Q212</strain>
    </source>
</reference>